<gene>
    <name type="primary">CSN3</name>
    <name type="synonym">CSN10</name>
    <name type="synonym">CSNK</name>
</gene>
<evidence type="ECO:0000250" key="1"/>
<evidence type="ECO:0000250" key="2">
    <source>
        <dbReference type="UniProtKB" id="P02668"/>
    </source>
</evidence>
<evidence type="ECO:0000250" key="3">
    <source>
        <dbReference type="UniProtKB" id="P02670"/>
    </source>
</evidence>
<evidence type="ECO:0000305" key="4"/>
<comment type="function">
    <text>Kappa-casein stabilizes micelle formation, preventing casein precipitation in milk.</text>
</comment>
<comment type="subcellular location">
    <subcellularLocation>
        <location>Secreted</location>
    </subcellularLocation>
</comment>
<comment type="tissue specificity">
    <text>Mammary gland specific. Secreted in milk.</text>
</comment>
<comment type="similarity">
    <text evidence="4">Belongs to the kappa-casein family.</text>
</comment>
<proteinExistence type="evidence at protein level"/>
<protein>
    <recommendedName>
        <fullName>Kappa-casein</fullName>
    </recommendedName>
</protein>
<name>CASK_PIG</name>
<reference key="1">
    <citation type="journal article" date="1992" name="Anim. Genet.">
        <title>Cloning and sequencing of the porcine kappa-casein cDNA.</title>
        <authorList>
            <person name="Levine W.B."/>
            <person name="Alexander L.J."/>
            <person name="Hoganson G.E."/>
            <person name="Beattie C.W."/>
        </authorList>
    </citation>
    <scope>NUCLEOTIDE SEQUENCE [MRNA]</scope>
    <source>
        <tissue>Mammary gland</tissue>
    </source>
</reference>
<reference key="2">
    <citation type="journal article" date="1976" name="FEBS Lett.">
        <title>Primary structure of the casein macropeptide of porcine and human kappa caseins.</title>
        <authorList>
            <person name="Chobert J.-M."/>
            <person name="Mercier J.-C."/>
            <person name="Bahy C."/>
            <person name="Haze G."/>
        </authorList>
    </citation>
    <scope>PROTEIN SEQUENCE OF 118-188</scope>
</reference>
<organism>
    <name type="scientific">Sus scrofa</name>
    <name type="common">Pig</name>
    <dbReference type="NCBI Taxonomy" id="9823"/>
    <lineage>
        <taxon>Eukaryota</taxon>
        <taxon>Metazoa</taxon>
        <taxon>Chordata</taxon>
        <taxon>Craniata</taxon>
        <taxon>Vertebrata</taxon>
        <taxon>Euteleostomi</taxon>
        <taxon>Mammalia</taxon>
        <taxon>Eutheria</taxon>
        <taxon>Laurasiatheria</taxon>
        <taxon>Artiodactyla</taxon>
        <taxon>Suina</taxon>
        <taxon>Suidae</taxon>
        <taxon>Sus</taxon>
    </lineage>
</organism>
<dbReference type="EMBL" id="X51977">
    <property type="protein sequence ID" value="CAA36239.1"/>
    <property type="molecule type" value="mRNA"/>
</dbReference>
<dbReference type="PIR" id="A48382">
    <property type="entry name" value="A48382"/>
</dbReference>
<dbReference type="RefSeq" id="NP_001004026.1">
    <property type="nucleotide sequence ID" value="NM_001004026.1"/>
</dbReference>
<dbReference type="FunCoup" id="P11841">
    <property type="interactions" value="24"/>
</dbReference>
<dbReference type="STRING" id="9823.ENSSSCP00000009882"/>
<dbReference type="GlyCosmos" id="P11841">
    <property type="glycosylation" value="4 sites, No reported glycans"/>
</dbReference>
<dbReference type="GlyGen" id="P11841">
    <property type="glycosylation" value="4 sites"/>
</dbReference>
<dbReference type="PaxDb" id="9823-ENSSSCP00000009882"/>
<dbReference type="PeptideAtlas" id="P11841"/>
<dbReference type="Ensembl" id="ENSSSCT00015052410.1">
    <property type="protein sequence ID" value="ENSSSCP00015020973.1"/>
    <property type="gene ID" value="ENSSSCG00015039360.1"/>
</dbReference>
<dbReference type="Ensembl" id="ENSSSCT00030071793.1">
    <property type="protein sequence ID" value="ENSSSCP00030032730.1"/>
    <property type="gene ID" value="ENSSSCG00030051538.1"/>
</dbReference>
<dbReference type="Ensembl" id="ENSSSCT00040074498.1">
    <property type="protein sequence ID" value="ENSSSCP00040031975.1"/>
    <property type="gene ID" value="ENSSSCG00040054991.1"/>
</dbReference>
<dbReference type="Ensembl" id="ENSSSCT00060031916.1">
    <property type="protein sequence ID" value="ENSSSCP00060013673.1"/>
    <property type="gene ID" value="ENSSSCG00060023533.1"/>
</dbReference>
<dbReference type="GeneID" id="445511"/>
<dbReference type="KEGG" id="ssc:445511"/>
<dbReference type="CTD" id="1448"/>
<dbReference type="eggNOG" id="ENOG502TM2T">
    <property type="taxonomic scope" value="Eukaryota"/>
</dbReference>
<dbReference type="HOGENOM" id="CLU_103388_0_0_1"/>
<dbReference type="InParanoid" id="P11841"/>
<dbReference type="OrthoDB" id="9836334at2759"/>
<dbReference type="Reactome" id="R-SSC-5223345">
    <property type="pathway name" value="Miscellaneous transport and binding events"/>
</dbReference>
<dbReference type="ChiTaRS" id="CSN3">
    <property type="organism name" value="pig"/>
</dbReference>
<dbReference type="Proteomes" id="UP000008227">
    <property type="component" value="Unplaced"/>
</dbReference>
<dbReference type="Proteomes" id="UP000314985">
    <property type="component" value="Unplaced"/>
</dbReference>
<dbReference type="Proteomes" id="UP000694570">
    <property type="component" value="Unplaced"/>
</dbReference>
<dbReference type="Proteomes" id="UP000694571">
    <property type="component" value="Unplaced"/>
</dbReference>
<dbReference type="Proteomes" id="UP000694720">
    <property type="component" value="Unplaced"/>
</dbReference>
<dbReference type="Proteomes" id="UP000694722">
    <property type="component" value="Unplaced"/>
</dbReference>
<dbReference type="Proteomes" id="UP000694723">
    <property type="component" value="Unplaced"/>
</dbReference>
<dbReference type="Proteomes" id="UP000694724">
    <property type="component" value="Unplaced"/>
</dbReference>
<dbReference type="Proteomes" id="UP000694725">
    <property type="component" value="Unplaced"/>
</dbReference>
<dbReference type="Proteomes" id="UP000694726">
    <property type="component" value="Unplaced"/>
</dbReference>
<dbReference type="Proteomes" id="UP000694727">
    <property type="component" value="Unplaced"/>
</dbReference>
<dbReference type="Proteomes" id="UP000694728">
    <property type="component" value="Unplaced"/>
</dbReference>
<dbReference type="GO" id="GO:0005615">
    <property type="term" value="C:extracellular space"/>
    <property type="evidence" value="ECO:0000318"/>
    <property type="project" value="GO_Central"/>
</dbReference>
<dbReference type="GO" id="GO:0007595">
    <property type="term" value="P:lactation"/>
    <property type="evidence" value="ECO:0000318"/>
    <property type="project" value="GO_Central"/>
</dbReference>
<dbReference type="GO" id="GO:0050821">
    <property type="term" value="P:protein stabilization"/>
    <property type="evidence" value="ECO:0000318"/>
    <property type="project" value="GO_Central"/>
</dbReference>
<dbReference type="InterPro" id="IPR000117">
    <property type="entry name" value="Casein_kappa"/>
</dbReference>
<dbReference type="PANTHER" id="PTHR11470">
    <property type="entry name" value="KAPPA CASEIN"/>
    <property type="match status" value="1"/>
</dbReference>
<dbReference type="PANTHER" id="PTHR11470:SF2">
    <property type="entry name" value="KAPPA-CASEIN"/>
    <property type="match status" value="1"/>
</dbReference>
<dbReference type="Pfam" id="PF00997">
    <property type="entry name" value="Casein_kappa"/>
    <property type="match status" value="1"/>
</dbReference>
<dbReference type="PIRSF" id="PIRSF002374">
    <property type="entry name" value="Casein_kappa"/>
    <property type="match status" value="1"/>
</dbReference>
<sequence length="188" mass="21122">MMKSSFLIVPILALTLPFLGAEEQNQEKLTRCESDKRLFNEEKVKYIPIYYMLNRFPSYGFFYQHRSAVSPNRQFIPYPYYARPVVAGPHAQKPQWQDQPNVYPPTVARRPRPHASFIAIPPKKNQDKTAIPAINSIATVEPTIVPATEPIVNAEPIVNAVVTPEASSEFLITSAPETTTVQVTSPVV</sequence>
<accession>P11841</accession>
<feature type="signal peptide" evidence="1">
    <location>
        <begin position="1"/>
        <end position="21"/>
    </location>
</feature>
<feature type="chain" id="PRO_0000004502" description="Kappa-casein">
    <location>
        <begin position="22"/>
        <end position="188"/>
    </location>
</feature>
<feature type="site" description="Cleavage; by chymosin/rennin" evidence="1">
    <location>
        <begin position="117"/>
        <end position="118"/>
    </location>
</feature>
<feature type="modified residue" description="Phosphothreonine" evidence="2">
    <location>
        <position position="163"/>
    </location>
</feature>
<feature type="modified residue" description="Phosphoserine; alternate" evidence="2">
    <location>
        <position position="167"/>
    </location>
</feature>
<feature type="modified residue" description="Phosphoserine" evidence="3">
    <location>
        <position position="185"/>
    </location>
</feature>
<feature type="glycosylation site" description="O-linked (GalNAc...) threonine" evidence="2">
    <location>
        <position position="143"/>
    </location>
</feature>
<feature type="glycosylation site" description="O-linked (GalNAc...) threonine" evidence="2">
    <location>
        <position position="148"/>
    </location>
</feature>
<feature type="glycosylation site" description="O-linked (GalNAc...) serine; alternate" evidence="2">
    <location>
        <position position="167"/>
    </location>
</feature>
<feature type="glycosylation site" description="O-linked (GalNAc...) threonine" evidence="2">
    <location>
        <position position="184"/>
    </location>
</feature>
<keyword id="KW-0903">Direct protein sequencing</keyword>
<keyword id="KW-0325">Glycoprotein</keyword>
<keyword id="KW-0494">Milk protein</keyword>
<keyword id="KW-0597">Phosphoprotein</keyword>
<keyword id="KW-1185">Reference proteome</keyword>
<keyword id="KW-0964">Secreted</keyword>
<keyword id="KW-0732">Signal</keyword>